<feature type="chain" id="PRO_0000402539" description="RNA-directed RNA polymerase subunit beta">
    <location>
        <begin position="1"/>
        <end position="586"/>
    </location>
</feature>
<feature type="domain" description="RdRp catalytic" evidence="2">
    <location>
        <begin position="259"/>
        <end position="391"/>
    </location>
</feature>
<feature type="binding site" evidence="1">
    <location>
        <position position="274"/>
    </location>
    <ligand>
        <name>Mg(2+)</name>
        <dbReference type="ChEBI" id="CHEBI:18420"/>
        <label>1</label>
    </ligand>
</feature>
<feature type="binding site" evidence="1">
    <location>
        <position position="274"/>
    </location>
    <ligand>
        <name>Mg(2+)</name>
        <dbReference type="ChEBI" id="CHEBI:18420"/>
        <label>2</label>
    </ligand>
</feature>
<feature type="binding site" evidence="1">
    <location>
        <position position="359"/>
    </location>
    <ligand>
        <name>Mg(2+)</name>
        <dbReference type="ChEBI" id="CHEBI:18420"/>
        <label>1</label>
    </ligand>
</feature>
<feature type="binding site" evidence="1">
    <location>
        <position position="359"/>
    </location>
    <ligand>
        <name>Mg(2+)</name>
        <dbReference type="ChEBI" id="CHEBI:18420"/>
        <label>2</label>
    </ligand>
</feature>
<feature type="binding site" evidence="1">
    <location>
        <position position="360"/>
    </location>
    <ligand>
        <name>Mg(2+)</name>
        <dbReference type="ChEBI" id="CHEBI:18420"/>
        <label>1</label>
    </ligand>
</feature>
<feature type="binding site" evidence="1">
    <location>
        <position position="360"/>
    </location>
    <ligand>
        <name>Mg(2+)</name>
        <dbReference type="ChEBI" id="CHEBI:18420"/>
        <label>2</label>
    </ligand>
</feature>
<reference key="1">
    <citation type="journal article" date="1995" name="J. Mol. Biol.">
        <title>Secondary structure model for the last two domains of single-stranded RNA phage Q beta.</title>
        <authorList>
            <person name="Beekwilder M.J."/>
            <person name="Nieuwenhuizen R."/>
            <person name="van Duin J."/>
        </authorList>
    </citation>
    <scope>NUCLEOTIDE SEQUENCE [GENOMIC RNA]</scope>
</reference>
<reference key="2">
    <citation type="journal article" date="1996" name="J. Mol. Biol.">
        <title>Secondary structure model for the first three domains of Q beta RNA. Control of A-protein synthesis.</title>
        <authorList>
            <person name="Beekwilder J."/>
            <person name="Nieuwenhuizen R."/>
            <person name="Poot R."/>
            <person name="van Duin J."/>
        </authorList>
    </citation>
    <scope>NUCLEOTIDE SEQUENCE [GENOMIC RNA]</scope>
</reference>
<organismHost>
    <name type="scientific">Escherichia coli</name>
    <dbReference type="NCBI Taxonomy" id="562"/>
</organismHost>
<evidence type="ECO:0000250" key="1">
    <source>
        <dbReference type="UniProtKB" id="P14647"/>
    </source>
</evidence>
<evidence type="ECO:0000255" key="2">
    <source>
        <dbReference type="PROSITE-ProRule" id="PRU00539"/>
    </source>
</evidence>
<accession>O64308</accession>
<dbReference type="EC" id="2.7.7.48" evidence="1"/>
<dbReference type="EMBL" id="AF059242">
    <property type="protein sequence ID" value="AAC14701.1"/>
    <property type="molecule type" value="Genomic_RNA"/>
</dbReference>
<dbReference type="RefSeq" id="NP_046752.1">
    <property type="nucleotide sequence ID" value="NC_001890.1"/>
</dbReference>
<dbReference type="SMR" id="O64308"/>
<dbReference type="GeneID" id="1261500"/>
<dbReference type="KEGG" id="vg:1261500"/>
<dbReference type="Proteomes" id="UP000001832">
    <property type="component" value="Genome"/>
</dbReference>
<dbReference type="GO" id="GO:0046872">
    <property type="term" value="F:metal ion binding"/>
    <property type="evidence" value="ECO:0007669"/>
    <property type="project" value="UniProtKB-KW"/>
</dbReference>
<dbReference type="GO" id="GO:0000166">
    <property type="term" value="F:nucleotide binding"/>
    <property type="evidence" value="ECO:0007669"/>
    <property type="project" value="UniProtKB-KW"/>
</dbReference>
<dbReference type="GO" id="GO:0003723">
    <property type="term" value="F:RNA binding"/>
    <property type="evidence" value="ECO:0007669"/>
    <property type="project" value="UniProtKB-KW"/>
</dbReference>
<dbReference type="GO" id="GO:0003968">
    <property type="term" value="F:RNA-directed RNA polymerase activity"/>
    <property type="evidence" value="ECO:0007669"/>
    <property type="project" value="UniProtKB-KW"/>
</dbReference>
<dbReference type="GO" id="GO:0039694">
    <property type="term" value="P:viral RNA genome replication"/>
    <property type="evidence" value="ECO:0007669"/>
    <property type="project" value="InterPro"/>
</dbReference>
<dbReference type="CDD" id="cd23176">
    <property type="entry name" value="ps-ssRNAv_Leviviridae_RdRp"/>
    <property type="match status" value="1"/>
</dbReference>
<dbReference type="InterPro" id="IPR043502">
    <property type="entry name" value="DNA/RNA_pol_sf"/>
</dbReference>
<dbReference type="InterPro" id="IPR007096">
    <property type="entry name" value="RNA-dir_Rpol_cat_phage"/>
</dbReference>
<dbReference type="InterPro" id="IPR005093">
    <property type="entry name" value="RNArep_beta"/>
</dbReference>
<dbReference type="Pfam" id="PF03431">
    <property type="entry name" value="RNA_replicase_B"/>
    <property type="match status" value="1"/>
</dbReference>
<dbReference type="SUPFAM" id="SSF56672">
    <property type="entry name" value="DNA/RNA polymerases"/>
    <property type="match status" value="1"/>
</dbReference>
<dbReference type="PROSITE" id="PS50522">
    <property type="entry name" value="RDRP_PHAGE"/>
    <property type="match status" value="1"/>
</dbReference>
<comment type="function">
    <text evidence="1">This is the catalytic subunit of the viral RNA-dependent RNA polymerase complex. This complex is involved in viral RNA replication that produces (+)-stranded genomes via a complementary, (-)-stranded intermediate. Binds RNA cooperatively with the host ribosomal protein S1.</text>
</comment>
<comment type="catalytic activity">
    <reaction evidence="1 2">
        <text>RNA(n) + a ribonucleoside 5'-triphosphate = RNA(n+1) + diphosphate</text>
        <dbReference type="Rhea" id="RHEA:21248"/>
        <dbReference type="Rhea" id="RHEA-COMP:14527"/>
        <dbReference type="Rhea" id="RHEA-COMP:17342"/>
        <dbReference type="ChEBI" id="CHEBI:33019"/>
        <dbReference type="ChEBI" id="CHEBI:61557"/>
        <dbReference type="ChEBI" id="CHEBI:140395"/>
        <dbReference type="EC" id="2.7.7.48"/>
    </reaction>
</comment>
<comment type="cofactor">
    <cofactor evidence="1">
        <name>Mg(2+)</name>
        <dbReference type="ChEBI" id="CHEBI:18420"/>
    </cofactor>
    <text evidence="1">Binds 2 Mg(2+) per subunit, Ca(2+) is used in crystallization to prevent RNA polymerase activity.</text>
</comment>
<comment type="subunit">
    <text evidence="1">Homodimer; the replicase complex can dimerize. Part of the viral RNA-dependent RNA polymerase complex, the other subunits are the host ribosomal protein S1, EF-Tu and EF-Ts. S1 is needed for the initiation of genomic RNA (+)-strand replication.</text>
</comment>
<keyword id="KW-0460">Magnesium</keyword>
<keyword id="KW-0479">Metal-binding</keyword>
<keyword id="KW-0547">Nucleotide-binding</keyword>
<keyword id="KW-0548">Nucleotidyltransferase</keyword>
<keyword id="KW-1185">Reference proteome</keyword>
<keyword id="KW-0694">RNA-binding</keyword>
<keyword id="KW-0696">RNA-directed RNA polymerase</keyword>
<keyword id="KW-0808">Transferase</keyword>
<keyword id="KW-0693">Viral RNA replication</keyword>
<protein>
    <recommendedName>
        <fullName>RNA-directed RNA polymerase subunit beta</fullName>
        <ecNumber evidence="1">2.7.7.48</ecNumber>
    </recommendedName>
    <alternativeName>
        <fullName>RNA replicase beta chain</fullName>
    </alternativeName>
</protein>
<sequence length="586" mass="65953">MSKTLQSRKSLSGKLRRAANTRIVVEGNLALSIANDLLSALDVEPFNSEEDCISRSPKFGISPDQFRNSYLRAEIMSKYDSFSLGINTEAVAWEKFLAAEAECAKTNLRLYRPNYNEDFNFSLGETCIHMARRKIVKLLGDSVPFEAVLRHCRFSGGATTTNSRLYGHPSFKFALAQECTPRAVPYVQALKACTNMDLGITKVSPFNKAVTVPKNSKTDRCIAIEPGWNMFFQLGIGGVIREKLHLWNIDLNDQTINQVRAYSGSCSNELATVDLSSASDTISLALVELLLPPAWFKVLTDLRSRRGMLPDGRIITYEKISSMGNGFTFELESLIFAALARSLCELLNLQPSSVTVYGDDIILPSDACSSLIEVFSYVGFRTNEKKTFFDGPFRESCGKHYFMGVDVTPFYIRHRIVSPSDLILVLNQMYRWATIDGVWDPRVYPVYTKYRRLLPDILRRNVVPDGYGDGALVGSVLTSPFAENRGWVRRVPMIIDKKKDRVRDERGSYLYELWSLQQLECDSEFPFNGSLVVGTNDGVCTYRHRERVSTAISDSVGAYDIVWIPCSSRVLAPYGDFRRHEGSILK</sequence>
<name>RDRP_BPMX1</name>
<proteinExistence type="inferred from homology"/>
<organism>
    <name type="scientific">Qbeta virus (strain MX1)</name>
    <dbReference type="NCBI Taxonomy" id="2789016"/>
    <lineage>
        <taxon>Viruses</taxon>
        <taxon>Riboviria</taxon>
        <taxon>Orthornavirae</taxon>
        <taxon>Lenarviricota</taxon>
        <taxon>Leviviricetes</taxon>
        <taxon>Norzivirales</taxon>
        <taxon>Fiersviridae</taxon>
        <taxon>Qubevirus</taxon>
        <taxon>Escherichia virus Qbeta</taxon>
    </lineage>
</organism>